<keyword id="KW-1185">Reference proteome</keyword>
<feature type="chain" id="PRO_1000009218" description="UPF0102 protein FRAAL5785">
    <location>
        <begin position="1"/>
        <end position="120"/>
    </location>
</feature>
<name>Y5785_FRAAA</name>
<evidence type="ECO:0000255" key="1">
    <source>
        <dbReference type="HAMAP-Rule" id="MF_00048"/>
    </source>
</evidence>
<protein>
    <recommendedName>
        <fullName evidence="1">UPF0102 protein FRAAL5785</fullName>
    </recommendedName>
</protein>
<gene>
    <name type="ordered locus">FRAAL5785</name>
</gene>
<accession>Q0RDP9</accession>
<dbReference type="EMBL" id="CT573213">
    <property type="protein sequence ID" value="CAJ64417.1"/>
    <property type="molecule type" value="Genomic_DNA"/>
</dbReference>
<dbReference type="SMR" id="Q0RDP9"/>
<dbReference type="STRING" id="326424.FRAAL5785"/>
<dbReference type="KEGG" id="fal:FRAAL5785"/>
<dbReference type="eggNOG" id="COG0792">
    <property type="taxonomic scope" value="Bacteria"/>
</dbReference>
<dbReference type="HOGENOM" id="CLU_115353_2_3_11"/>
<dbReference type="Proteomes" id="UP000000657">
    <property type="component" value="Chromosome"/>
</dbReference>
<dbReference type="GO" id="GO:0003676">
    <property type="term" value="F:nucleic acid binding"/>
    <property type="evidence" value="ECO:0007669"/>
    <property type="project" value="InterPro"/>
</dbReference>
<dbReference type="CDD" id="cd20736">
    <property type="entry name" value="PoNe_Nuclease"/>
    <property type="match status" value="1"/>
</dbReference>
<dbReference type="Gene3D" id="3.40.1350.10">
    <property type="match status" value="1"/>
</dbReference>
<dbReference type="HAMAP" id="MF_00048">
    <property type="entry name" value="UPF0102"/>
    <property type="match status" value="1"/>
</dbReference>
<dbReference type="InterPro" id="IPR011335">
    <property type="entry name" value="Restrct_endonuc-II-like"/>
</dbReference>
<dbReference type="InterPro" id="IPR011856">
    <property type="entry name" value="tRNA_endonuc-like_dom_sf"/>
</dbReference>
<dbReference type="InterPro" id="IPR003509">
    <property type="entry name" value="UPF0102_YraN-like"/>
</dbReference>
<dbReference type="NCBIfam" id="NF009150">
    <property type="entry name" value="PRK12497.1-3"/>
    <property type="match status" value="1"/>
</dbReference>
<dbReference type="NCBIfam" id="NF009154">
    <property type="entry name" value="PRK12497.3-3"/>
    <property type="match status" value="1"/>
</dbReference>
<dbReference type="NCBIfam" id="TIGR00252">
    <property type="entry name" value="YraN family protein"/>
    <property type="match status" value="1"/>
</dbReference>
<dbReference type="PANTHER" id="PTHR34039">
    <property type="entry name" value="UPF0102 PROTEIN YRAN"/>
    <property type="match status" value="1"/>
</dbReference>
<dbReference type="PANTHER" id="PTHR34039:SF1">
    <property type="entry name" value="UPF0102 PROTEIN YRAN"/>
    <property type="match status" value="1"/>
</dbReference>
<dbReference type="Pfam" id="PF02021">
    <property type="entry name" value="UPF0102"/>
    <property type="match status" value="1"/>
</dbReference>
<dbReference type="SUPFAM" id="SSF52980">
    <property type="entry name" value="Restriction endonuclease-like"/>
    <property type="match status" value="1"/>
</dbReference>
<comment type="similarity">
    <text evidence="1">Belongs to the UPF0102 family.</text>
</comment>
<proteinExistence type="inferred from homology"/>
<organism>
    <name type="scientific">Frankia alni (strain DSM 45986 / CECT 9034 / ACN14a)</name>
    <dbReference type="NCBI Taxonomy" id="326424"/>
    <lineage>
        <taxon>Bacteria</taxon>
        <taxon>Bacillati</taxon>
        <taxon>Actinomycetota</taxon>
        <taxon>Actinomycetes</taxon>
        <taxon>Frankiales</taxon>
        <taxon>Frankiaceae</taxon>
        <taxon>Frankia</taxon>
    </lineage>
</organism>
<sequence>MAMRAKDALGRFGEEVASRHLAAGGAAILDRNWRCREGELDLVLRDGADLVFCEVKTRSGTRFGSAAEAVVGRKAARIRRLAARWLAEHPHAPSSVRFDVVLVSRPPVGPVRVEHLRGAF</sequence>
<reference key="1">
    <citation type="journal article" date="2007" name="Genome Res.">
        <title>Genome characteristics of facultatively symbiotic Frankia sp. strains reflect host range and host plant biogeography.</title>
        <authorList>
            <person name="Normand P."/>
            <person name="Lapierre P."/>
            <person name="Tisa L.S."/>
            <person name="Gogarten J.P."/>
            <person name="Alloisio N."/>
            <person name="Bagnarol E."/>
            <person name="Bassi C.A."/>
            <person name="Berry A.M."/>
            <person name="Bickhart D.M."/>
            <person name="Choisne N."/>
            <person name="Couloux A."/>
            <person name="Cournoyer B."/>
            <person name="Cruveiller S."/>
            <person name="Daubin V."/>
            <person name="Demange N."/>
            <person name="Francino M.P."/>
            <person name="Goltsman E."/>
            <person name="Huang Y."/>
            <person name="Kopp O.R."/>
            <person name="Labarre L."/>
            <person name="Lapidus A."/>
            <person name="Lavire C."/>
            <person name="Marechal J."/>
            <person name="Martinez M."/>
            <person name="Mastronunzio J.E."/>
            <person name="Mullin B.C."/>
            <person name="Niemann J."/>
            <person name="Pujic P."/>
            <person name="Rawnsley T."/>
            <person name="Rouy Z."/>
            <person name="Schenowitz C."/>
            <person name="Sellstedt A."/>
            <person name="Tavares F."/>
            <person name="Tomkins J.P."/>
            <person name="Vallenet D."/>
            <person name="Valverde C."/>
            <person name="Wall L.G."/>
            <person name="Wang Y."/>
            <person name="Medigue C."/>
            <person name="Benson D.R."/>
        </authorList>
    </citation>
    <scope>NUCLEOTIDE SEQUENCE [LARGE SCALE GENOMIC DNA]</scope>
    <source>
        <strain>DSM 45986 / CECT 9034 / ACN14a</strain>
    </source>
</reference>